<organism>
    <name type="scientific">Arabidopsis thaliana</name>
    <name type="common">Mouse-ear cress</name>
    <dbReference type="NCBI Taxonomy" id="3702"/>
    <lineage>
        <taxon>Eukaryota</taxon>
        <taxon>Viridiplantae</taxon>
        <taxon>Streptophyta</taxon>
        <taxon>Embryophyta</taxon>
        <taxon>Tracheophyta</taxon>
        <taxon>Spermatophyta</taxon>
        <taxon>Magnoliopsida</taxon>
        <taxon>eudicotyledons</taxon>
        <taxon>Gunneridae</taxon>
        <taxon>Pentapetalae</taxon>
        <taxon>rosids</taxon>
        <taxon>malvids</taxon>
        <taxon>Brassicales</taxon>
        <taxon>Brassicaceae</taxon>
        <taxon>Camelineae</taxon>
        <taxon>Arabidopsis</taxon>
    </lineage>
</organism>
<protein>
    <recommendedName>
        <fullName>Lysine histidine transporter-like 8</fullName>
    </recommendedName>
    <alternativeName>
        <fullName>Amino acid transporter-like protein 1</fullName>
    </alternativeName>
</protein>
<reference key="1">
    <citation type="submission" date="1999-07" db="EMBL/GenBank/DDBJ databases">
        <title>Arabidopsis AATL1 gene encoding putative amino acid transporter.</title>
        <authorList>
            <person name="Uefuji H."/>
            <person name="Takase H."/>
            <person name="Hiratsuka K."/>
        </authorList>
    </citation>
    <scope>NUCLEOTIDE SEQUENCE [MRNA]</scope>
    <source>
        <strain>cv. Columbia</strain>
    </source>
</reference>
<reference key="2">
    <citation type="journal article" date="2000" name="Nature">
        <title>Sequence and analysis of chromosome 1 of the plant Arabidopsis thaliana.</title>
        <authorList>
            <person name="Theologis A."/>
            <person name="Ecker J.R."/>
            <person name="Palm C.J."/>
            <person name="Federspiel N.A."/>
            <person name="Kaul S."/>
            <person name="White O."/>
            <person name="Alonso J."/>
            <person name="Altafi H."/>
            <person name="Araujo R."/>
            <person name="Bowman C.L."/>
            <person name="Brooks S.Y."/>
            <person name="Buehler E."/>
            <person name="Chan A."/>
            <person name="Chao Q."/>
            <person name="Chen H."/>
            <person name="Cheuk R.F."/>
            <person name="Chin C.W."/>
            <person name="Chung M.K."/>
            <person name="Conn L."/>
            <person name="Conway A.B."/>
            <person name="Conway A.R."/>
            <person name="Creasy T.H."/>
            <person name="Dewar K."/>
            <person name="Dunn P."/>
            <person name="Etgu P."/>
            <person name="Feldblyum T.V."/>
            <person name="Feng J.-D."/>
            <person name="Fong B."/>
            <person name="Fujii C.Y."/>
            <person name="Gill J.E."/>
            <person name="Goldsmith A.D."/>
            <person name="Haas B."/>
            <person name="Hansen N.F."/>
            <person name="Hughes B."/>
            <person name="Huizar L."/>
            <person name="Hunter J.L."/>
            <person name="Jenkins J."/>
            <person name="Johnson-Hopson C."/>
            <person name="Khan S."/>
            <person name="Khaykin E."/>
            <person name="Kim C.J."/>
            <person name="Koo H.L."/>
            <person name="Kremenetskaia I."/>
            <person name="Kurtz D.B."/>
            <person name="Kwan A."/>
            <person name="Lam B."/>
            <person name="Langin-Hooper S."/>
            <person name="Lee A."/>
            <person name="Lee J.M."/>
            <person name="Lenz C.A."/>
            <person name="Li J.H."/>
            <person name="Li Y.-P."/>
            <person name="Lin X."/>
            <person name="Liu S.X."/>
            <person name="Liu Z.A."/>
            <person name="Luros J.S."/>
            <person name="Maiti R."/>
            <person name="Marziali A."/>
            <person name="Militscher J."/>
            <person name="Miranda M."/>
            <person name="Nguyen M."/>
            <person name="Nierman W.C."/>
            <person name="Osborne B.I."/>
            <person name="Pai G."/>
            <person name="Peterson J."/>
            <person name="Pham P.K."/>
            <person name="Rizzo M."/>
            <person name="Rooney T."/>
            <person name="Rowley D."/>
            <person name="Sakano H."/>
            <person name="Salzberg S.L."/>
            <person name="Schwartz J.R."/>
            <person name="Shinn P."/>
            <person name="Southwick A.M."/>
            <person name="Sun H."/>
            <person name="Tallon L.J."/>
            <person name="Tambunga G."/>
            <person name="Toriumi M.J."/>
            <person name="Town C.D."/>
            <person name="Utterback T."/>
            <person name="Van Aken S."/>
            <person name="Vaysberg M."/>
            <person name="Vysotskaia V.S."/>
            <person name="Walker M."/>
            <person name="Wu D."/>
            <person name="Yu G."/>
            <person name="Fraser C.M."/>
            <person name="Venter J.C."/>
            <person name="Davis R.W."/>
        </authorList>
    </citation>
    <scope>NUCLEOTIDE SEQUENCE [LARGE SCALE GENOMIC DNA]</scope>
    <source>
        <strain>cv. Columbia</strain>
    </source>
</reference>
<reference key="3">
    <citation type="journal article" date="2017" name="Plant J.">
        <title>Araport11: a complete reannotation of the Arabidopsis thaliana reference genome.</title>
        <authorList>
            <person name="Cheng C.Y."/>
            <person name="Krishnakumar V."/>
            <person name="Chan A.P."/>
            <person name="Thibaud-Nissen F."/>
            <person name="Schobel S."/>
            <person name="Town C.D."/>
        </authorList>
    </citation>
    <scope>GENOME REANNOTATION</scope>
    <source>
        <strain>cv. Columbia</strain>
    </source>
</reference>
<reference key="4">
    <citation type="journal article" date="2003" name="Science">
        <title>Empirical analysis of transcriptional activity in the Arabidopsis genome.</title>
        <authorList>
            <person name="Yamada K."/>
            <person name="Lim J."/>
            <person name="Dale J.M."/>
            <person name="Chen H."/>
            <person name="Shinn P."/>
            <person name="Palm C.J."/>
            <person name="Southwick A.M."/>
            <person name="Wu H.C."/>
            <person name="Kim C.J."/>
            <person name="Nguyen M."/>
            <person name="Pham P.K."/>
            <person name="Cheuk R.F."/>
            <person name="Karlin-Newmann G."/>
            <person name="Liu S.X."/>
            <person name="Lam B."/>
            <person name="Sakano H."/>
            <person name="Wu T."/>
            <person name="Yu G."/>
            <person name="Miranda M."/>
            <person name="Quach H.L."/>
            <person name="Tripp M."/>
            <person name="Chang C.H."/>
            <person name="Lee J.M."/>
            <person name="Toriumi M.J."/>
            <person name="Chan M.M."/>
            <person name="Tang C.C."/>
            <person name="Onodera C.S."/>
            <person name="Deng J.M."/>
            <person name="Akiyama K."/>
            <person name="Ansari Y."/>
            <person name="Arakawa T."/>
            <person name="Banh J."/>
            <person name="Banno F."/>
            <person name="Bowser L."/>
            <person name="Brooks S.Y."/>
            <person name="Carninci P."/>
            <person name="Chao Q."/>
            <person name="Choy N."/>
            <person name="Enju A."/>
            <person name="Goldsmith A.D."/>
            <person name="Gurjal M."/>
            <person name="Hansen N.F."/>
            <person name="Hayashizaki Y."/>
            <person name="Johnson-Hopson C."/>
            <person name="Hsuan V.W."/>
            <person name="Iida K."/>
            <person name="Karnes M."/>
            <person name="Khan S."/>
            <person name="Koesema E."/>
            <person name="Ishida J."/>
            <person name="Jiang P.X."/>
            <person name="Jones T."/>
            <person name="Kawai J."/>
            <person name="Kamiya A."/>
            <person name="Meyers C."/>
            <person name="Nakajima M."/>
            <person name="Narusaka M."/>
            <person name="Seki M."/>
            <person name="Sakurai T."/>
            <person name="Satou M."/>
            <person name="Tamse R."/>
            <person name="Vaysberg M."/>
            <person name="Wallender E.K."/>
            <person name="Wong C."/>
            <person name="Yamamura Y."/>
            <person name="Yuan S."/>
            <person name="Shinozaki K."/>
            <person name="Davis R.W."/>
            <person name="Theologis A."/>
            <person name="Ecker J.R."/>
        </authorList>
    </citation>
    <scope>NUCLEOTIDE SEQUENCE [LARGE SCALE MRNA]</scope>
    <source>
        <strain>cv. Columbia</strain>
    </source>
</reference>
<reference key="5">
    <citation type="journal article" date="2003" name="Mol. Cell. Proteomics">
        <title>Large-scale analysis of in vivo phosphorylated membrane proteins by immobilized metal ion affinity chromatography and mass spectrometry.</title>
        <authorList>
            <person name="Nuehse T.S."/>
            <person name="Stensballe A."/>
            <person name="Jensen O.N."/>
            <person name="Peck S.C."/>
        </authorList>
    </citation>
    <scope>IDENTIFICATION BY MASS SPECTROMETRY [LARGE SCALE ANALYSIS]</scope>
    <source>
        <strain>cv. La-0</strain>
    </source>
</reference>
<reference key="6">
    <citation type="journal article" date="2004" name="Plant Cell">
        <title>Phosphoproteomics of the Arabidopsis plasma membrane and a new phosphorylation site database.</title>
        <authorList>
            <person name="Nuehse T.S."/>
            <person name="Stensballe A."/>
            <person name="Jensen O.N."/>
            <person name="Peck S.C."/>
        </authorList>
    </citation>
    <scope>SUBCELLULAR LOCATION</scope>
    <scope>IDENTIFICATION BY MASS SPECTROMETRY [LARGE SCALE ANALYSIS]</scope>
</reference>
<reference key="7">
    <citation type="journal article" date="2004" name="Plant J.">
        <title>Selective expression of a novel high-affinity transport system for acidic and neutral amino acids in the tapetum cells of Arabidopsis flowers.</title>
        <authorList>
            <person name="Lee Y.-H."/>
            <person name="Tegeder M."/>
        </authorList>
    </citation>
    <scope>GENE FAMILY</scope>
    <source>
        <strain>cv. C24</strain>
    </source>
</reference>
<evidence type="ECO:0000250" key="1"/>
<evidence type="ECO:0000255" key="2"/>
<evidence type="ECO:0000256" key="3">
    <source>
        <dbReference type="SAM" id="MobiDB-lite"/>
    </source>
</evidence>
<evidence type="ECO:0000269" key="4">
    <source>
    </source>
</evidence>
<evidence type="ECO:0000305" key="5"/>
<keyword id="KW-0029">Amino-acid transport</keyword>
<keyword id="KW-1003">Cell membrane</keyword>
<keyword id="KW-0472">Membrane</keyword>
<keyword id="KW-1185">Reference proteome</keyword>
<keyword id="KW-0812">Transmembrane</keyword>
<keyword id="KW-1133">Transmembrane helix</keyword>
<keyword id="KW-0813">Transport</keyword>
<gene>
    <name type="primary">AATL1</name>
    <name type="ordered locus">At1g47670</name>
    <name type="ORF">F16N3.4</name>
</gene>
<comment type="function">
    <text evidence="1">Amino acid transporter.</text>
</comment>
<comment type="subcellular location">
    <subcellularLocation>
        <location evidence="4">Cell membrane</location>
        <topology evidence="4">Multi-pass membrane protein</topology>
    </subcellularLocation>
</comment>
<comment type="similarity">
    <text evidence="5">Belongs to the amino acid/polyamine transporter 2 family. Amino acid/auxin permease (AAAP) (TC 2.A.18.2) subfamily.</text>
</comment>
<dbReference type="EMBL" id="AB030586">
    <property type="protein sequence ID" value="BAA82706.1"/>
    <property type="molecule type" value="Genomic_DNA"/>
</dbReference>
<dbReference type="EMBL" id="AC007519">
    <property type="protein sequence ID" value="AAD46019.1"/>
    <property type="molecule type" value="Genomic_DNA"/>
</dbReference>
<dbReference type="EMBL" id="CP002684">
    <property type="protein sequence ID" value="AEE32199.1"/>
    <property type="molecule type" value="Genomic_DNA"/>
</dbReference>
<dbReference type="EMBL" id="AY065445">
    <property type="protein sequence ID" value="AAL38886.1"/>
    <property type="molecule type" value="mRNA"/>
</dbReference>
<dbReference type="EMBL" id="AY117276">
    <property type="protein sequence ID" value="AAM51351.1"/>
    <property type="molecule type" value="mRNA"/>
</dbReference>
<dbReference type="PIR" id="F96517">
    <property type="entry name" value="F96517"/>
</dbReference>
<dbReference type="RefSeq" id="NP_175198.1">
    <property type="nucleotide sequence ID" value="NM_103660.6"/>
</dbReference>
<dbReference type="BioGRID" id="26402">
    <property type="interactions" value="31"/>
</dbReference>
<dbReference type="FunCoup" id="Q9SX98">
    <property type="interactions" value="125"/>
</dbReference>
<dbReference type="IntAct" id="Q9SX98">
    <property type="interactions" value="30"/>
</dbReference>
<dbReference type="STRING" id="3702.Q9SX98"/>
<dbReference type="TCDB" id="2.A.18.2.8">
    <property type="family name" value="the amino acid/auxin permease (aaap) family"/>
</dbReference>
<dbReference type="iPTMnet" id="Q9SX98"/>
<dbReference type="PaxDb" id="3702-AT1G47670.1"/>
<dbReference type="ProteomicsDB" id="238380"/>
<dbReference type="EnsemblPlants" id="AT1G47670.1">
    <property type="protein sequence ID" value="AT1G47670.1"/>
    <property type="gene ID" value="AT1G47670"/>
</dbReference>
<dbReference type="GeneID" id="841177"/>
<dbReference type="Gramene" id="AT1G47670.1">
    <property type="protein sequence ID" value="AT1G47670.1"/>
    <property type="gene ID" value="AT1G47670"/>
</dbReference>
<dbReference type="KEGG" id="ath:AT1G47670"/>
<dbReference type="Araport" id="AT1G47670"/>
<dbReference type="TAIR" id="AT1G47670"/>
<dbReference type="eggNOG" id="KOG1303">
    <property type="taxonomic scope" value="Eukaryota"/>
</dbReference>
<dbReference type="HOGENOM" id="CLU_031160_2_1_1"/>
<dbReference type="InParanoid" id="Q9SX98"/>
<dbReference type="OMA" id="CLTIAYF"/>
<dbReference type="OrthoDB" id="40134at2759"/>
<dbReference type="PhylomeDB" id="Q9SX98"/>
<dbReference type="PRO" id="PR:Q9SX98"/>
<dbReference type="Proteomes" id="UP000006548">
    <property type="component" value="Chromosome 1"/>
</dbReference>
<dbReference type="ExpressionAtlas" id="Q9SX98">
    <property type="expression patterns" value="baseline and differential"/>
</dbReference>
<dbReference type="GO" id="GO:0005886">
    <property type="term" value="C:plasma membrane"/>
    <property type="evidence" value="ECO:0007005"/>
    <property type="project" value="TAIR"/>
</dbReference>
<dbReference type="GO" id="GO:0006865">
    <property type="term" value="P:amino acid transport"/>
    <property type="evidence" value="ECO:0007669"/>
    <property type="project" value="UniProtKB-KW"/>
</dbReference>
<dbReference type="InterPro" id="IPR013057">
    <property type="entry name" value="AA_transpt_TM"/>
</dbReference>
<dbReference type="PANTHER" id="PTHR48017">
    <property type="entry name" value="OS05G0424000 PROTEIN-RELATED"/>
    <property type="match status" value="1"/>
</dbReference>
<dbReference type="Pfam" id="PF01490">
    <property type="entry name" value="Aa_trans"/>
    <property type="match status" value="1"/>
</dbReference>
<accession>Q9SX98</accession>
<accession>Q9SXF7</accession>
<proteinExistence type="evidence at protein level"/>
<sequence length="519" mass="57119">MDERPETELISIPATPRVSTPEILTPSGQRSPRPATKPSSATWTPTSFISPRFLSPIGTPMKRVLVNMKGYLEEVGHLTKLNPQDAWLPITESRNGNAHYAAFHNLNAGVGFQALVLPVAFAFLGWSWGILSLTIAYCWQLYTLWILVQLHEAVPGKRYNRYVELAQAAFGERLGVWLALFPTVYLSAGTATALILIGGETMKLFFQIVCGPLCTSNPLTTVEWYLVFTSLCIVLSQLPNLNSIAGLSLIGAVTAITYSTMVWVLSVSQPRPATISYEPLSMPSTSGSLFAVLNALGIIAFAFRGHNLVLEIQSTMPSTFKHPAHVPMWRGAKISYFLIALCIFPISIGGFWAYGNLMPSGGMLAALYAFHIHDIPRGLLATAFLLVVFSCLSSFQIYSMPAFDSFEAGYTSRTNKPCSIWVRSGFRVFFGFVSFFIGVALPFLSSLAGLLGGLTLPVTFAYPCFMWVLIKKPAKYSFNWYFHWGLGWLGVAFSLAFSIGGIWSMVTNGLKLKFFKPPN</sequence>
<feature type="chain" id="PRO_0000387978" description="Lysine histidine transporter-like 8">
    <location>
        <begin position="1"/>
        <end position="519"/>
    </location>
</feature>
<feature type="topological domain" description="Cytoplasmic" evidence="2">
    <location>
        <begin position="1"/>
        <end position="114"/>
    </location>
</feature>
<feature type="transmembrane region" description="Helical" evidence="2">
    <location>
        <begin position="115"/>
        <end position="135"/>
    </location>
</feature>
<feature type="transmembrane region" description="Helical" evidence="2">
    <location>
        <begin position="136"/>
        <end position="156"/>
    </location>
</feature>
<feature type="topological domain" description="Cytoplasmic" evidence="2">
    <location>
        <begin position="157"/>
        <end position="176"/>
    </location>
</feature>
<feature type="transmembrane region" description="Helical" evidence="2">
    <location>
        <begin position="177"/>
        <end position="197"/>
    </location>
</feature>
<feature type="topological domain" description="Extracellular" evidence="2">
    <location>
        <begin position="198"/>
        <end position="217"/>
    </location>
</feature>
<feature type="transmembrane region" description="Helical" evidence="2">
    <location>
        <begin position="218"/>
        <end position="238"/>
    </location>
</feature>
<feature type="topological domain" description="Cytoplasmic" evidence="2">
    <location>
        <begin position="239"/>
        <end position="243"/>
    </location>
</feature>
<feature type="transmembrane region" description="Helical" evidence="2">
    <location>
        <begin position="244"/>
        <end position="264"/>
    </location>
</feature>
<feature type="topological domain" description="Extracellular" evidence="2">
    <location>
        <begin position="265"/>
        <end position="282"/>
    </location>
</feature>
<feature type="transmembrane region" description="Helical" evidence="2">
    <location>
        <begin position="283"/>
        <end position="303"/>
    </location>
</feature>
<feature type="topological domain" description="Cytoplasmic" evidence="2">
    <location>
        <begin position="304"/>
        <end position="333"/>
    </location>
</feature>
<feature type="transmembrane region" description="Helical" evidence="2">
    <location>
        <begin position="334"/>
        <end position="354"/>
    </location>
</feature>
<feature type="topological domain" description="Extracellular" evidence="2">
    <location>
        <begin position="355"/>
        <end position="377"/>
    </location>
</feature>
<feature type="transmembrane region" description="Helical" evidence="2">
    <location>
        <begin position="378"/>
        <end position="398"/>
    </location>
</feature>
<feature type="topological domain" description="Cytoplasmic" evidence="2">
    <location>
        <begin position="399"/>
        <end position="427"/>
    </location>
</feature>
<feature type="transmembrane region" description="Helical" evidence="2">
    <location>
        <begin position="428"/>
        <end position="448"/>
    </location>
</feature>
<feature type="topological domain" description="Extracellular" evidence="2">
    <location>
        <position position="449"/>
    </location>
</feature>
<feature type="transmembrane region" description="Helical" evidence="2">
    <location>
        <begin position="450"/>
        <end position="470"/>
    </location>
</feature>
<feature type="topological domain" description="Cytoplasmic" evidence="2">
    <location>
        <begin position="471"/>
        <end position="485"/>
    </location>
</feature>
<feature type="transmembrane region" description="Helical" evidence="2">
    <location>
        <begin position="486"/>
        <end position="506"/>
    </location>
</feature>
<feature type="topological domain" description="Extracellular" evidence="2">
    <location>
        <begin position="507"/>
        <end position="519"/>
    </location>
</feature>
<feature type="region of interest" description="Disordered" evidence="3">
    <location>
        <begin position="1"/>
        <end position="44"/>
    </location>
</feature>
<feature type="sequence conflict" description="In Ref. 1; BAA82706." evidence="5" ref="1">
    <original>N</original>
    <variation>D</variation>
    <location>
        <position position="240"/>
    </location>
</feature>
<name>LHTL8_ARATH</name>